<proteinExistence type="inferred from homology"/>
<feature type="chain" id="PRO_1000187535" description="Segregation and condensation protein B">
    <location>
        <begin position="1"/>
        <end position="193"/>
    </location>
</feature>
<reference key="1">
    <citation type="journal article" date="2007" name="PLoS ONE">
        <title>Analysis of the neurotoxin complex genes in Clostridium botulinum A1-A4 and B1 strains: BoNT/A3, /Ba4 and /B1 clusters are located within plasmids.</title>
        <authorList>
            <person name="Smith T.J."/>
            <person name="Hill K.K."/>
            <person name="Foley B.T."/>
            <person name="Detter J.C."/>
            <person name="Munk A.C."/>
            <person name="Bruce D.C."/>
            <person name="Doggett N.A."/>
            <person name="Smith L.A."/>
            <person name="Marks J.D."/>
            <person name="Xie G."/>
            <person name="Brettin T.S."/>
        </authorList>
    </citation>
    <scope>NUCLEOTIDE SEQUENCE [LARGE SCALE GENOMIC DNA]</scope>
    <source>
        <strain>Loch Maree / Type A3</strain>
    </source>
</reference>
<keyword id="KW-0131">Cell cycle</keyword>
<keyword id="KW-0132">Cell division</keyword>
<keyword id="KW-0159">Chromosome partition</keyword>
<keyword id="KW-0963">Cytoplasm</keyword>
<comment type="function">
    <text evidence="1">Participates in chromosomal partition during cell division. May act via the formation of a condensin-like complex containing Smc and ScpA that pull DNA away from mid-cell into both cell halves.</text>
</comment>
<comment type="subunit">
    <text evidence="1">Homodimer. Homodimerization may be required to stabilize the binding of ScpA to the Smc head domains. Component of a cohesin-like complex composed of ScpA, ScpB and the Smc homodimer, in which ScpA and ScpB bind to the head domain of Smc. The presence of the three proteins is required for the association of the complex with DNA.</text>
</comment>
<comment type="subcellular location">
    <subcellularLocation>
        <location evidence="1">Cytoplasm</location>
    </subcellularLocation>
    <text evidence="1">Associated with two foci at the outer edges of the nucleoid region in young cells, and at four foci within both cell halves in older cells.</text>
</comment>
<comment type="similarity">
    <text evidence="1">Belongs to the ScpB family.</text>
</comment>
<accession>B1KT22</accession>
<sequence>MNKDHEEQLEINEVSQKNKYKSIIESLLFMSGEPINIKDLATILNCKQDKVSSLLNEMNNSYVGKDRGIKILIHNRAVQLVTKPENSIYVEKLLKTNVRQSLSQAALETLSIIAYKQPITRVAIDEIRGVKSDRAIYTLLEKNIIKECGRLDVPGKPILYGTTEEFLKFFGLDSIEAIPNLEDLLKEFSKEEN</sequence>
<protein>
    <recommendedName>
        <fullName evidence="1">Segregation and condensation protein B</fullName>
    </recommendedName>
</protein>
<organism>
    <name type="scientific">Clostridium botulinum (strain Loch Maree / Type A3)</name>
    <dbReference type="NCBI Taxonomy" id="498214"/>
    <lineage>
        <taxon>Bacteria</taxon>
        <taxon>Bacillati</taxon>
        <taxon>Bacillota</taxon>
        <taxon>Clostridia</taxon>
        <taxon>Eubacteriales</taxon>
        <taxon>Clostridiaceae</taxon>
        <taxon>Clostridium</taxon>
    </lineage>
</organism>
<evidence type="ECO:0000255" key="1">
    <source>
        <dbReference type="HAMAP-Rule" id="MF_01804"/>
    </source>
</evidence>
<gene>
    <name evidence="1" type="primary">scpB</name>
    <name type="ordered locus">CLK_1242</name>
</gene>
<name>SCPB_CLOBM</name>
<dbReference type="EMBL" id="CP000962">
    <property type="protein sequence ID" value="ACA53996.1"/>
    <property type="molecule type" value="Genomic_DNA"/>
</dbReference>
<dbReference type="RefSeq" id="WP_003402814.1">
    <property type="nucleotide sequence ID" value="NC_010520.1"/>
</dbReference>
<dbReference type="SMR" id="B1KT22"/>
<dbReference type="GeneID" id="5186111"/>
<dbReference type="KEGG" id="cbl:CLK_1242"/>
<dbReference type="HOGENOM" id="CLU_045647_5_3_9"/>
<dbReference type="GO" id="GO:0005737">
    <property type="term" value="C:cytoplasm"/>
    <property type="evidence" value="ECO:0007669"/>
    <property type="project" value="UniProtKB-SubCell"/>
</dbReference>
<dbReference type="GO" id="GO:0051301">
    <property type="term" value="P:cell division"/>
    <property type="evidence" value="ECO:0007669"/>
    <property type="project" value="UniProtKB-KW"/>
</dbReference>
<dbReference type="GO" id="GO:0051304">
    <property type="term" value="P:chromosome separation"/>
    <property type="evidence" value="ECO:0007669"/>
    <property type="project" value="InterPro"/>
</dbReference>
<dbReference type="GO" id="GO:0006260">
    <property type="term" value="P:DNA replication"/>
    <property type="evidence" value="ECO:0007669"/>
    <property type="project" value="UniProtKB-UniRule"/>
</dbReference>
<dbReference type="Gene3D" id="1.10.10.10">
    <property type="entry name" value="Winged helix-like DNA-binding domain superfamily/Winged helix DNA-binding domain"/>
    <property type="match status" value="2"/>
</dbReference>
<dbReference type="HAMAP" id="MF_01804">
    <property type="entry name" value="ScpB"/>
    <property type="match status" value="1"/>
</dbReference>
<dbReference type="InterPro" id="IPR005234">
    <property type="entry name" value="ScpB_csome_segregation"/>
</dbReference>
<dbReference type="InterPro" id="IPR036388">
    <property type="entry name" value="WH-like_DNA-bd_sf"/>
</dbReference>
<dbReference type="InterPro" id="IPR036390">
    <property type="entry name" value="WH_DNA-bd_sf"/>
</dbReference>
<dbReference type="NCBIfam" id="TIGR00281">
    <property type="entry name" value="SMC-Scp complex subunit ScpB"/>
    <property type="match status" value="1"/>
</dbReference>
<dbReference type="PANTHER" id="PTHR34298">
    <property type="entry name" value="SEGREGATION AND CONDENSATION PROTEIN B"/>
    <property type="match status" value="1"/>
</dbReference>
<dbReference type="PANTHER" id="PTHR34298:SF2">
    <property type="entry name" value="SEGREGATION AND CONDENSATION PROTEIN B"/>
    <property type="match status" value="1"/>
</dbReference>
<dbReference type="Pfam" id="PF04079">
    <property type="entry name" value="SMC_ScpB"/>
    <property type="match status" value="1"/>
</dbReference>
<dbReference type="PIRSF" id="PIRSF019345">
    <property type="entry name" value="ScpB"/>
    <property type="match status" value="1"/>
</dbReference>
<dbReference type="SUPFAM" id="SSF46785">
    <property type="entry name" value="Winged helix' DNA-binding domain"/>
    <property type="match status" value="2"/>
</dbReference>